<reference key="1">
    <citation type="submission" date="2005-11" db="EMBL/GenBank/DDBJ databases">
        <authorList>
            <consortium name="NIH - Mammalian Gene Collection (MGC) project"/>
        </authorList>
    </citation>
    <scope>NUCLEOTIDE SEQUENCE [LARGE SCALE MRNA]</scope>
    <source>
        <strain>Crossbred X Angus</strain>
        <tissue>Liver</tissue>
    </source>
</reference>
<dbReference type="EMBL" id="BC109509">
    <property type="protein sequence ID" value="AAI09510.1"/>
    <property type="molecule type" value="mRNA"/>
</dbReference>
<dbReference type="RefSeq" id="NP_001073070.1">
    <property type="nucleotide sequence ID" value="NM_001079602.2"/>
</dbReference>
<dbReference type="SMR" id="Q32LM6"/>
<dbReference type="FunCoup" id="Q32LM6">
    <property type="interactions" value="216"/>
</dbReference>
<dbReference type="STRING" id="9913.ENSBTAP00000066458"/>
<dbReference type="PaxDb" id="9913-ENSBTAP00000015103"/>
<dbReference type="Ensembl" id="ENSBTAT00000015103.5">
    <property type="protein sequence ID" value="ENSBTAP00000015103.4"/>
    <property type="gene ID" value="ENSBTAG00000011367.6"/>
</dbReference>
<dbReference type="GeneID" id="528379"/>
<dbReference type="KEGG" id="bta:528379"/>
<dbReference type="CTD" id="8825"/>
<dbReference type="VEuPathDB" id="HostDB:ENSBTAG00000011367"/>
<dbReference type="VGNC" id="VGNC:30895">
    <property type="gene designation" value="LIN7A"/>
</dbReference>
<dbReference type="eggNOG" id="KOG3550">
    <property type="taxonomic scope" value="Eukaryota"/>
</dbReference>
<dbReference type="GeneTree" id="ENSGT00940000153222"/>
<dbReference type="HOGENOM" id="CLU_097962_0_0_1"/>
<dbReference type="InParanoid" id="Q32LM6"/>
<dbReference type="OMA" id="EHETEFI"/>
<dbReference type="OrthoDB" id="10056216at2759"/>
<dbReference type="TreeFam" id="TF316850"/>
<dbReference type="Reactome" id="R-BTA-212676">
    <property type="pathway name" value="Dopamine Neurotransmitter Release Cycle"/>
</dbReference>
<dbReference type="Proteomes" id="UP000009136">
    <property type="component" value="Chromosome 5"/>
</dbReference>
<dbReference type="Bgee" id="ENSBTAG00000011367">
    <property type="expression patterns" value="Expressed in semen and 91 other cell types or tissues"/>
</dbReference>
<dbReference type="GO" id="GO:0016323">
    <property type="term" value="C:basolateral plasma membrane"/>
    <property type="evidence" value="ECO:0000318"/>
    <property type="project" value="GO_Central"/>
</dbReference>
<dbReference type="GO" id="GO:0005923">
    <property type="term" value="C:bicellular tight junction"/>
    <property type="evidence" value="ECO:0007669"/>
    <property type="project" value="UniProtKB-SubCell"/>
</dbReference>
<dbReference type="GO" id="GO:0005911">
    <property type="term" value="C:cell-cell junction"/>
    <property type="evidence" value="ECO:0000318"/>
    <property type="project" value="GO_Central"/>
</dbReference>
<dbReference type="GO" id="GO:0097025">
    <property type="term" value="C:MPP7-DLG1-LIN7 complex"/>
    <property type="evidence" value="ECO:0000318"/>
    <property type="project" value="GO_Central"/>
</dbReference>
<dbReference type="GO" id="GO:0098839">
    <property type="term" value="C:postsynaptic density membrane"/>
    <property type="evidence" value="ECO:0007669"/>
    <property type="project" value="UniProtKB-SubCell"/>
</dbReference>
<dbReference type="GO" id="GO:0098793">
    <property type="term" value="C:presynapse"/>
    <property type="evidence" value="ECO:0007669"/>
    <property type="project" value="GOC"/>
</dbReference>
<dbReference type="GO" id="GO:0045202">
    <property type="term" value="C:synapse"/>
    <property type="evidence" value="ECO:0000318"/>
    <property type="project" value="GO_Central"/>
</dbReference>
<dbReference type="GO" id="GO:0097016">
    <property type="term" value="F:L27 domain binding"/>
    <property type="evidence" value="ECO:0007669"/>
    <property type="project" value="Ensembl"/>
</dbReference>
<dbReference type="GO" id="GO:0030674">
    <property type="term" value="F:protein-macromolecule adaptor activity"/>
    <property type="evidence" value="ECO:0000318"/>
    <property type="project" value="GO_Central"/>
</dbReference>
<dbReference type="GO" id="GO:0006887">
    <property type="term" value="P:exocytosis"/>
    <property type="evidence" value="ECO:0007669"/>
    <property type="project" value="UniProtKB-KW"/>
</dbReference>
<dbReference type="GO" id="GO:0048839">
    <property type="term" value="P:inner ear development"/>
    <property type="evidence" value="ECO:0007669"/>
    <property type="project" value="Ensembl"/>
</dbReference>
<dbReference type="GO" id="GO:0007269">
    <property type="term" value="P:neurotransmitter secretion"/>
    <property type="evidence" value="ECO:0000318"/>
    <property type="project" value="GO_Central"/>
</dbReference>
<dbReference type="GO" id="GO:0015031">
    <property type="term" value="P:protein transport"/>
    <property type="evidence" value="ECO:0007669"/>
    <property type="project" value="UniProtKB-KW"/>
</dbReference>
<dbReference type="GO" id="GO:0008582">
    <property type="term" value="P:regulation of synaptic assembly at neuromuscular junction"/>
    <property type="evidence" value="ECO:0000318"/>
    <property type="project" value="GO_Central"/>
</dbReference>
<dbReference type="GO" id="GO:0048489">
    <property type="term" value="P:synaptic vesicle transport"/>
    <property type="evidence" value="ECO:0000318"/>
    <property type="project" value="GO_Central"/>
</dbReference>
<dbReference type="CDD" id="cd06796">
    <property type="entry name" value="PDZ_Lin-7-like"/>
    <property type="match status" value="1"/>
</dbReference>
<dbReference type="FunFam" id="2.30.42.10:FF:000076">
    <property type="entry name" value="Protein lin-7 homolog"/>
    <property type="match status" value="1"/>
</dbReference>
<dbReference type="Gene3D" id="2.30.42.10">
    <property type="match status" value="1"/>
</dbReference>
<dbReference type="Gene3D" id="1.10.287.650">
    <property type="entry name" value="L27 domain"/>
    <property type="match status" value="1"/>
</dbReference>
<dbReference type="InterPro" id="IPR014775">
    <property type="entry name" value="L27_C"/>
</dbReference>
<dbReference type="InterPro" id="IPR004172">
    <property type="entry name" value="L27_dom"/>
</dbReference>
<dbReference type="InterPro" id="IPR036892">
    <property type="entry name" value="L27_dom_sf"/>
</dbReference>
<dbReference type="InterPro" id="IPR017365">
    <property type="entry name" value="LIN7"/>
</dbReference>
<dbReference type="InterPro" id="IPR051109">
    <property type="entry name" value="MAM_complex_regulator"/>
</dbReference>
<dbReference type="InterPro" id="IPR001478">
    <property type="entry name" value="PDZ"/>
</dbReference>
<dbReference type="InterPro" id="IPR036034">
    <property type="entry name" value="PDZ_sf"/>
</dbReference>
<dbReference type="PANTHER" id="PTHR14063">
    <property type="entry name" value="PROTEIN LIN-7 HOMOLOG"/>
    <property type="match status" value="1"/>
</dbReference>
<dbReference type="Pfam" id="PF02828">
    <property type="entry name" value="L27"/>
    <property type="match status" value="1"/>
</dbReference>
<dbReference type="Pfam" id="PF00595">
    <property type="entry name" value="PDZ"/>
    <property type="match status" value="1"/>
</dbReference>
<dbReference type="PIRSF" id="PIRSF038039">
    <property type="entry name" value="Lin-7_homologue"/>
    <property type="match status" value="1"/>
</dbReference>
<dbReference type="SMART" id="SM00569">
    <property type="entry name" value="L27"/>
    <property type="match status" value="1"/>
</dbReference>
<dbReference type="SMART" id="SM00228">
    <property type="entry name" value="PDZ"/>
    <property type="match status" value="1"/>
</dbReference>
<dbReference type="SUPFAM" id="SSF101288">
    <property type="entry name" value="L27 domain"/>
    <property type="match status" value="1"/>
</dbReference>
<dbReference type="SUPFAM" id="SSF50156">
    <property type="entry name" value="PDZ domain-like"/>
    <property type="match status" value="1"/>
</dbReference>
<dbReference type="PROSITE" id="PS51022">
    <property type="entry name" value="L27"/>
    <property type="match status" value="1"/>
</dbReference>
<dbReference type="PROSITE" id="PS50106">
    <property type="entry name" value="PDZ"/>
    <property type="match status" value="1"/>
</dbReference>
<name>LIN7A_BOVIN</name>
<accession>Q32LM6</accession>
<keyword id="KW-0965">Cell junction</keyword>
<keyword id="KW-1003">Cell membrane</keyword>
<keyword id="KW-0268">Exocytosis</keyword>
<keyword id="KW-0472">Membrane</keyword>
<keyword id="KW-0628">Postsynaptic cell membrane</keyword>
<keyword id="KW-0653">Protein transport</keyword>
<keyword id="KW-1185">Reference proteome</keyword>
<keyword id="KW-0770">Synapse</keyword>
<keyword id="KW-0796">Tight junction</keyword>
<keyword id="KW-0813">Transport</keyword>
<gene>
    <name type="primary">LIN7A</name>
</gene>
<protein>
    <recommendedName>
        <fullName>Protein lin-7 homolog A</fullName>
        <shortName>Lin-7A</shortName>
    </recommendedName>
</protein>
<feature type="chain" id="PRO_0000238667" description="Protein lin-7 homolog A">
    <location>
        <begin position="1"/>
        <end position="233"/>
    </location>
</feature>
<feature type="domain" description="L27" evidence="4">
    <location>
        <begin position="25"/>
        <end position="80"/>
    </location>
</feature>
<feature type="domain" description="PDZ" evidence="3">
    <location>
        <begin position="108"/>
        <end position="190"/>
    </location>
</feature>
<evidence type="ECO:0000250" key="1"/>
<evidence type="ECO:0000250" key="2">
    <source>
        <dbReference type="UniProtKB" id="Q8JZS0"/>
    </source>
</evidence>
<evidence type="ECO:0000255" key="3">
    <source>
        <dbReference type="PROSITE-ProRule" id="PRU00143"/>
    </source>
</evidence>
<evidence type="ECO:0000255" key="4">
    <source>
        <dbReference type="PROSITE-ProRule" id="PRU00365"/>
    </source>
</evidence>
<evidence type="ECO:0000305" key="5"/>
<organism>
    <name type="scientific">Bos taurus</name>
    <name type="common">Bovine</name>
    <dbReference type="NCBI Taxonomy" id="9913"/>
    <lineage>
        <taxon>Eukaryota</taxon>
        <taxon>Metazoa</taxon>
        <taxon>Chordata</taxon>
        <taxon>Craniata</taxon>
        <taxon>Vertebrata</taxon>
        <taxon>Euteleostomi</taxon>
        <taxon>Mammalia</taxon>
        <taxon>Eutheria</taxon>
        <taxon>Laurasiatheria</taxon>
        <taxon>Artiodactyla</taxon>
        <taxon>Ruminantia</taxon>
        <taxon>Pecora</taxon>
        <taxon>Bovidae</taxon>
        <taxon>Bovinae</taxon>
        <taxon>Bos</taxon>
    </lineage>
</organism>
<comment type="function">
    <text evidence="1 2">Plays a role in establishing and maintaining the asymmetric distribution of channels and receptors at the plasma membrane of polarized cells. Forms membrane-associated multiprotein complexes that may regulate delivery and recycling of proteins to the correct membrane domains. The tripartite complex composed of LIN7 (LIN7A, LIN7B or LIN7C), CASK and APBA1 associates with the motor protein KIF17 to transport vesicles containing N-methyl-D-aspartate (NMDA) receptor subunit NR2B along microtubules (By similarity). This complex may have the potential to couple synaptic vesicle exocytosis to cell adhesion in brain. Ensures the proper localization of GRIN2B (subunit 2B of the NMDA receptor) to neuronal postsynaptic density and may function in localizing synaptic vesicles at synapses where it is recruited by beta-catenin and cadherin. Required to localize Kir2 channels, GABA transporter (SLC6A12) and EGFR/ERBB1, ERBB2, ERBB3 and ERBB4 to the basolateral membrane of epithelial cells (By similarity).</text>
</comment>
<comment type="subunit">
    <text evidence="1 2">Forms a complex with CASK and CASKIN1. Component of the brain-specific heterotrimeric complex (LIN-10-LIN-2-LIN-7 complex) composed of at least APBA1, CASK, and LIN7, which associates with the motor protein KIF17 to transport vesicles along microtubules (By similarity). Can also interact with other modular proteins containing protein-protein interaction domains like PALS1, PALS2, MPP7, DLG1, DLG2 and DLG3 through its L27 domain. Interacts with DLG4, GRIN2B and MARCHF11 as well as CDH1 and CTNNB1, the channels KCNJ12/Kir2.2, KCNJ4/Kir2.3 and probably KCNJ2/Kir2.1 and SLC6A12/BGT-1 via its PDZ domain. The association of LIN7A with cadherin and beta-catenin is calcium-dependent, occurs at synaptic junctions and requires the actin cytoskeleton. Interacts with EGFR, ERBB2, ERBB3 and ERBB4 with both PDZ and KID domains. Associates with KIF17 via APBA1. Interacts with HTR4. Forms a tripartite complex composed of DLG1, MPP7 and LIN7 (LIN7A or LIN7C) (By similarity).</text>
</comment>
<comment type="subcellular location">
    <subcellularLocation>
        <location evidence="2">Cell membrane</location>
        <topology evidence="2">Peripheral membrane protein</topology>
    </subcellularLocation>
    <subcellularLocation>
        <location evidence="2">Basolateral cell membrane</location>
        <topology evidence="2">Peripheral membrane protein</topology>
    </subcellularLocation>
    <subcellularLocation>
        <location evidence="2">Cell junction</location>
    </subcellularLocation>
    <subcellularLocation>
        <location evidence="2">Postsynaptic density membrane</location>
        <topology evidence="2">Peripheral membrane protein</topology>
    </subcellularLocation>
    <subcellularLocation>
        <location evidence="2">Cell junction</location>
        <location evidence="2">Tight junction</location>
    </subcellularLocation>
    <text evidence="2">Mainly basolateral in renal epithelial cells.</text>
</comment>
<comment type="domain">
    <text evidence="1">The L27 domain mediates interaction with CASK and is involved in the formation of multimeric complexes and the association of LIN7 to membranes.</text>
</comment>
<comment type="domain">
    <text evidence="1">The PDZ domain regulates endocytosis and recycling of the receptor at the membrane.</text>
</comment>
<comment type="domain">
    <text evidence="1">The kinase interacting site is required for proper delivery of ERBB2 to the basolateral membrane.</text>
</comment>
<comment type="similarity">
    <text evidence="5">Belongs to the lin-7 family.</text>
</comment>
<proteinExistence type="evidence at transcript level"/>
<sequence>MLKPSVTSAPTADMATLTVVQPLTLDRDVARAIELLEKLQESGEVPVHKLQSLKKVLQSEFCTAIREVYQYMHETITVNGCPEFRARATAKATVAAFAASEGHSHPRVVELPKTDEGLGFNVMGGKEQNSPIYISRIIPGGVAERHGGLKRGDQLLSVNGVSVEGEHHEKAVELLKAAKDSVKLVVRYTPKVLEEMEARFEKLRTARRRQQQQLLIQQQQQQQQQQTQQNHMS</sequence>